<dbReference type="EMBL" id="AF153012">
    <property type="protein sequence ID" value="AAD34159.1"/>
    <property type="molecule type" value="mRNA"/>
</dbReference>
<dbReference type="EMBL" id="AF153013">
    <property type="protein sequence ID" value="AAD34160.1"/>
    <property type="molecule type" value="mRNA"/>
</dbReference>
<dbReference type="EMBL" id="AJ132718">
    <property type="protein sequence ID" value="CAB42003.1"/>
    <property type="molecule type" value="mRNA"/>
</dbReference>
<dbReference type="EMBL" id="AF135598">
    <property type="protein sequence ID" value="AAD24484.1"/>
    <property type="molecule type" value="mRNA"/>
</dbReference>
<dbReference type="EMBL" id="X71904">
    <property type="protein sequence ID" value="CAA50723.1"/>
    <property type="molecule type" value="mRNA"/>
</dbReference>
<dbReference type="EMBL" id="M96643">
    <property type="protein sequence ID" value="AAA88514.1"/>
    <property type="status" value="ALT_SEQ"/>
    <property type="molecule type" value="mRNA"/>
</dbReference>
<dbReference type="PIR" id="A40699">
    <property type="entry name" value="A40699"/>
</dbReference>
<dbReference type="RefSeq" id="NP_001420846.1">
    <molecule id="Q07257-2"/>
    <property type="nucleotide sequence ID" value="NM_001433917.1"/>
</dbReference>
<dbReference type="RefSeq" id="NP_112393.1">
    <property type="nucleotide sequence ID" value="NM_031131.1"/>
</dbReference>
<dbReference type="RefSeq" id="XP_006250510.1">
    <property type="nucleotide sequence ID" value="XM_006250448.3"/>
</dbReference>
<dbReference type="SMR" id="Q07257"/>
<dbReference type="FunCoup" id="Q07257">
    <property type="interactions" value="2791"/>
</dbReference>
<dbReference type="STRING" id="10116.ENSRNOP00000003313"/>
<dbReference type="GlyCosmos" id="Q07257">
    <property type="glycosylation" value="3 sites, No reported glycans"/>
</dbReference>
<dbReference type="GlyGen" id="Q07257">
    <property type="glycosylation" value="3 sites"/>
</dbReference>
<dbReference type="PhosphoSitePlus" id="Q07257"/>
<dbReference type="PaxDb" id="10116-ENSRNOP00000003313"/>
<dbReference type="GeneID" id="81809"/>
<dbReference type="KEGG" id="rno:81809"/>
<dbReference type="UCSC" id="RGD:70491">
    <molecule id="Q07257-1"/>
    <property type="organism name" value="rat"/>
</dbReference>
<dbReference type="AGR" id="RGD:70491"/>
<dbReference type="CTD" id="7042"/>
<dbReference type="RGD" id="70491">
    <property type="gene designation" value="Tgfb2"/>
</dbReference>
<dbReference type="eggNOG" id="KOG3900">
    <property type="taxonomic scope" value="Eukaryota"/>
</dbReference>
<dbReference type="InParanoid" id="Q07257"/>
<dbReference type="PhylomeDB" id="Q07257"/>
<dbReference type="Reactome" id="R-RNO-114608">
    <property type="pathway name" value="Platelet degranulation"/>
</dbReference>
<dbReference type="Reactome" id="R-RNO-2129379">
    <property type="pathway name" value="Molecules associated with elastic fibres"/>
</dbReference>
<dbReference type="Reactome" id="R-RNO-2173789">
    <property type="pathway name" value="TGF-beta receptor signaling activates SMADs"/>
</dbReference>
<dbReference type="Reactome" id="R-RNO-9839389">
    <property type="pathway name" value="TGFBR3 regulates TGF-beta signaling"/>
</dbReference>
<dbReference type="PRO" id="PR:Q07257"/>
<dbReference type="Proteomes" id="UP000002494">
    <property type="component" value="Chromosome 13"/>
</dbReference>
<dbReference type="Bgee" id="ENSRNOG00000002418">
    <property type="expression patterns" value="Expressed in lung and 19 other cell types or tissues"/>
</dbReference>
<dbReference type="ExpressionAtlas" id="Q07257">
    <property type="expression patterns" value="baseline and differential"/>
</dbReference>
<dbReference type="GO" id="GO:0030424">
    <property type="term" value="C:axon"/>
    <property type="evidence" value="ECO:0000250"/>
    <property type="project" value="UniProtKB"/>
</dbReference>
<dbReference type="GO" id="GO:0005604">
    <property type="term" value="C:basement membrane"/>
    <property type="evidence" value="ECO:0000314"/>
    <property type="project" value="RGD"/>
</dbReference>
<dbReference type="GO" id="GO:0009986">
    <property type="term" value="C:cell surface"/>
    <property type="evidence" value="ECO:0000314"/>
    <property type="project" value="RGD"/>
</dbReference>
<dbReference type="GO" id="GO:0005768">
    <property type="term" value="C:endosome"/>
    <property type="evidence" value="ECO:0000266"/>
    <property type="project" value="RGD"/>
</dbReference>
<dbReference type="GO" id="GO:0031012">
    <property type="term" value="C:extracellular matrix"/>
    <property type="evidence" value="ECO:0000250"/>
    <property type="project" value="AgBase"/>
</dbReference>
<dbReference type="GO" id="GO:0005576">
    <property type="term" value="C:extracellular region"/>
    <property type="evidence" value="ECO:0000250"/>
    <property type="project" value="AgBase"/>
</dbReference>
<dbReference type="GO" id="GO:0005615">
    <property type="term" value="C:extracellular space"/>
    <property type="evidence" value="ECO:0000314"/>
    <property type="project" value="RGD"/>
</dbReference>
<dbReference type="GO" id="GO:0043025">
    <property type="term" value="C:neuronal cell body"/>
    <property type="evidence" value="ECO:0000250"/>
    <property type="project" value="UniProtKB"/>
</dbReference>
<dbReference type="GO" id="GO:0030141">
    <property type="term" value="C:secretory granule"/>
    <property type="evidence" value="ECO:0000314"/>
    <property type="project" value="RGD"/>
</dbReference>
<dbReference type="GO" id="GO:0005802">
    <property type="term" value="C:trans-Golgi network"/>
    <property type="evidence" value="ECO:0000314"/>
    <property type="project" value="RGD"/>
</dbReference>
<dbReference type="GO" id="GO:0001540">
    <property type="term" value="F:amyloid-beta binding"/>
    <property type="evidence" value="ECO:0000250"/>
    <property type="project" value="AgBase"/>
</dbReference>
<dbReference type="GO" id="GO:0005125">
    <property type="term" value="F:cytokine activity"/>
    <property type="evidence" value="ECO:0000318"/>
    <property type="project" value="GO_Central"/>
</dbReference>
<dbReference type="GO" id="GO:0008083">
    <property type="term" value="F:growth factor activity"/>
    <property type="evidence" value="ECO:0007669"/>
    <property type="project" value="UniProtKB-KW"/>
</dbReference>
<dbReference type="GO" id="GO:0042802">
    <property type="term" value="F:identical protein binding"/>
    <property type="evidence" value="ECO:0000353"/>
    <property type="project" value="RGD"/>
</dbReference>
<dbReference type="GO" id="GO:0042803">
    <property type="term" value="F:protein homodimerization activity"/>
    <property type="evidence" value="ECO:0000250"/>
    <property type="project" value="AgBase"/>
</dbReference>
<dbReference type="GO" id="GO:0044877">
    <property type="term" value="F:protein-containing complex binding"/>
    <property type="evidence" value="ECO:0000314"/>
    <property type="project" value="RGD"/>
</dbReference>
<dbReference type="GO" id="GO:0005102">
    <property type="term" value="F:signaling receptor binding"/>
    <property type="evidence" value="ECO:0000250"/>
    <property type="project" value="AgBase"/>
</dbReference>
<dbReference type="GO" id="GO:0005160">
    <property type="term" value="F:transforming growth factor beta receptor binding"/>
    <property type="evidence" value="ECO:0000250"/>
    <property type="project" value="AgBase"/>
</dbReference>
<dbReference type="GO" id="GO:0005114">
    <property type="term" value="F:type II transforming growth factor beta receptor binding"/>
    <property type="evidence" value="ECO:0000250"/>
    <property type="project" value="AgBase"/>
</dbReference>
<dbReference type="GO" id="GO:0034714">
    <property type="term" value="F:type III transforming growth factor beta receptor binding"/>
    <property type="evidence" value="ECO:0000250"/>
    <property type="project" value="AgBase"/>
</dbReference>
<dbReference type="GO" id="GO:0006924">
    <property type="term" value="P:activation-induced cell death of T cells"/>
    <property type="evidence" value="ECO:0000266"/>
    <property type="project" value="RGD"/>
</dbReference>
<dbReference type="GO" id="GO:0035910">
    <property type="term" value="P:ascending aorta morphogenesis"/>
    <property type="evidence" value="ECO:0000266"/>
    <property type="project" value="RGD"/>
</dbReference>
<dbReference type="GO" id="GO:0060413">
    <property type="term" value="P:atrial septum morphogenesis"/>
    <property type="evidence" value="ECO:0000266"/>
    <property type="project" value="RGD"/>
</dbReference>
<dbReference type="GO" id="GO:0003289">
    <property type="term" value="P:atrial septum primum morphogenesis"/>
    <property type="evidence" value="ECO:0000266"/>
    <property type="project" value="RGD"/>
</dbReference>
<dbReference type="GO" id="GO:0003181">
    <property type="term" value="P:atrioventricular valve morphogenesis"/>
    <property type="evidence" value="ECO:0000266"/>
    <property type="project" value="RGD"/>
</dbReference>
<dbReference type="GO" id="GO:0007411">
    <property type="term" value="P:axon guidance"/>
    <property type="evidence" value="ECO:0000266"/>
    <property type="project" value="RGD"/>
</dbReference>
<dbReference type="GO" id="GO:0001568">
    <property type="term" value="P:blood vessel development"/>
    <property type="evidence" value="ECO:0000266"/>
    <property type="project" value="RGD"/>
</dbReference>
<dbReference type="GO" id="GO:0001974">
    <property type="term" value="P:blood vessel remodeling"/>
    <property type="evidence" value="ECO:0000266"/>
    <property type="project" value="RGD"/>
</dbReference>
<dbReference type="GO" id="GO:0060317">
    <property type="term" value="P:cardiac epithelial to mesenchymal transition"/>
    <property type="evidence" value="ECO:0000250"/>
    <property type="project" value="AgBase"/>
</dbReference>
<dbReference type="GO" id="GO:0060038">
    <property type="term" value="P:cardiac muscle cell proliferation"/>
    <property type="evidence" value="ECO:0000250"/>
    <property type="project" value="AgBase"/>
</dbReference>
<dbReference type="GO" id="GO:0003215">
    <property type="term" value="P:cardiac right ventricle morphogenesis"/>
    <property type="evidence" value="ECO:0000266"/>
    <property type="project" value="RGD"/>
</dbReference>
<dbReference type="GO" id="GO:0010002">
    <property type="term" value="P:cardioblast differentiation"/>
    <property type="evidence" value="ECO:0000250"/>
    <property type="project" value="AgBase"/>
</dbReference>
<dbReference type="GO" id="GO:0001502">
    <property type="term" value="P:cartilage condensation"/>
    <property type="evidence" value="ECO:0000266"/>
    <property type="project" value="RGD"/>
</dbReference>
<dbReference type="GO" id="GO:0016477">
    <property type="term" value="P:cell migration"/>
    <property type="evidence" value="ECO:0000250"/>
    <property type="project" value="AgBase"/>
</dbReference>
<dbReference type="GO" id="GO:0000902">
    <property type="term" value="P:cell morphogenesis"/>
    <property type="evidence" value="ECO:0000250"/>
    <property type="project" value="AgBase"/>
</dbReference>
<dbReference type="GO" id="GO:0045216">
    <property type="term" value="P:cell-cell junction organization"/>
    <property type="evidence" value="ECO:0000250"/>
    <property type="project" value="AgBase"/>
</dbReference>
<dbReference type="GO" id="GO:0030199">
    <property type="term" value="P:collagen fibril organization"/>
    <property type="evidence" value="ECO:0000250"/>
    <property type="project" value="AgBase"/>
</dbReference>
<dbReference type="GO" id="GO:1904888">
    <property type="term" value="P:cranial skeletal system development"/>
    <property type="evidence" value="ECO:0000266"/>
    <property type="project" value="RGD"/>
</dbReference>
<dbReference type="GO" id="GO:0048565">
    <property type="term" value="P:digestive tract development"/>
    <property type="evidence" value="ECO:0000270"/>
    <property type="project" value="RGD"/>
</dbReference>
<dbReference type="GO" id="GO:0042416">
    <property type="term" value="P:dopamine biosynthetic process"/>
    <property type="evidence" value="ECO:0000250"/>
    <property type="project" value="UniProtKB"/>
</dbReference>
<dbReference type="GO" id="GO:0048566">
    <property type="term" value="P:embryonic digestive tract development"/>
    <property type="evidence" value="ECO:0000250"/>
    <property type="project" value="AgBase"/>
</dbReference>
<dbReference type="GO" id="GO:0030326">
    <property type="term" value="P:embryonic limb morphogenesis"/>
    <property type="evidence" value="ECO:0000266"/>
    <property type="project" value="RGD"/>
</dbReference>
<dbReference type="GO" id="GO:0048702">
    <property type="term" value="P:embryonic neurocranium morphogenesis"/>
    <property type="evidence" value="ECO:0000314"/>
    <property type="project" value="RGD"/>
</dbReference>
<dbReference type="GO" id="GO:0003274">
    <property type="term" value="P:endocardial cushion fusion"/>
    <property type="evidence" value="ECO:0000266"/>
    <property type="project" value="RGD"/>
</dbReference>
<dbReference type="GO" id="GO:0003203">
    <property type="term" value="P:endocardial cushion morphogenesis"/>
    <property type="evidence" value="ECO:0000266"/>
    <property type="project" value="RGD"/>
</dbReference>
<dbReference type="GO" id="GO:0030855">
    <property type="term" value="P:epithelial cell differentiation"/>
    <property type="evidence" value="ECO:0000250"/>
    <property type="project" value="AgBase"/>
</dbReference>
<dbReference type="GO" id="GO:0001837">
    <property type="term" value="P:epithelial to mesenchymal transition"/>
    <property type="evidence" value="ECO:0000250"/>
    <property type="project" value="AgBase"/>
</dbReference>
<dbReference type="GO" id="GO:0030198">
    <property type="term" value="P:extracellular matrix organization"/>
    <property type="evidence" value="ECO:0000266"/>
    <property type="project" value="RGD"/>
</dbReference>
<dbReference type="GO" id="GO:0097191">
    <property type="term" value="P:extrinsic apoptotic signaling pathway"/>
    <property type="evidence" value="ECO:0000250"/>
    <property type="project" value="AgBase"/>
</dbReference>
<dbReference type="GO" id="GO:0097192">
    <property type="term" value="P:extrinsic apoptotic signaling pathway in absence of ligand"/>
    <property type="evidence" value="ECO:0000266"/>
    <property type="project" value="RGD"/>
</dbReference>
<dbReference type="GO" id="GO:0001654">
    <property type="term" value="P:eye development"/>
    <property type="evidence" value="ECO:0000250"/>
    <property type="project" value="AgBase"/>
</dbReference>
<dbReference type="GO" id="GO:0060325">
    <property type="term" value="P:face morphogenesis"/>
    <property type="evidence" value="ECO:0000266"/>
    <property type="project" value="RGD"/>
</dbReference>
<dbReference type="GO" id="GO:0007565">
    <property type="term" value="P:female pregnancy"/>
    <property type="evidence" value="ECO:0000270"/>
    <property type="project" value="RGD"/>
</dbReference>
<dbReference type="GO" id="GO:0060364">
    <property type="term" value="P:frontal suture morphogenesis"/>
    <property type="evidence" value="ECO:0000270"/>
    <property type="project" value="RGD"/>
</dbReference>
<dbReference type="GO" id="GO:0008347">
    <property type="term" value="P:glial cell migration"/>
    <property type="evidence" value="ECO:0000250"/>
    <property type="project" value="AgBase"/>
</dbReference>
<dbReference type="GO" id="GO:0001942">
    <property type="term" value="P:hair follicle development"/>
    <property type="evidence" value="ECO:0000250"/>
    <property type="project" value="AgBase"/>
</dbReference>
<dbReference type="GO" id="GO:0031069">
    <property type="term" value="P:hair follicle morphogenesis"/>
    <property type="evidence" value="ECO:0000250"/>
    <property type="project" value="UniProtKB"/>
</dbReference>
<dbReference type="GO" id="GO:0007507">
    <property type="term" value="P:heart development"/>
    <property type="evidence" value="ECO:0000250"/>
    <property type="project" value="AgBase"/>
</dbReference>
<dbReference type="GO" id="GO:0003007">
    <property type="term" value="P:heart morphogenesis"/>
    <property type="evidence" value="ECO:0000250"/>
    <property type="project" value="AgBase"/>
</dbReference>
<dbReference type="GO" id="GO:0003179">
    <property type="term" value="P:heart valve morphogenesis"/>
    <property type="evidence" value="ECO:0000266"/>
    <property type="project" value="RGD"/>
</dbReference>
<dbReference type="GO" id="GO:0030097">
    <property type="term" value="P:hemopoiesis"/>
    <property type="evidence" value="ECO:0000250"/>
    <property type="project" value="UniProtKB"/>
</dbReference>
<dbReference type="GO" id="GO:0030902">
    <property type="term" value="P:hindbrain development"/>
    <property type="evidence" value="ECO:0000270"/>
    <property type="project" value="RGD"/>
</dbReference>
<dbReference type="GO" id="GO:0048839">
    <property type="term" value="P:inner ear development"/>
    <property type="evidence" value="ECO:0000270"/>
    <property type="project" value="RGD"/>
</dbReference>
<dbReference type="GO" id="GO:0001822">
    <property type="term" value="P:kidney development"/>
    <property type="evidence" value="ECO:0000270"/>
    <property type="project" value="RGD"/>
</dbReference>
<dbReference type="GO" id="GO:0030324">
    <property type="term" value="P:lung development"/>
    <property type="evidence" value="ECO:0000304"/>
    <property type="project" value="RGD"/>
</dbReference>
<dbReference type="GO" id="GO:0008584">
    <property type="term" value="P:male gonad development"/>
    <property type="evidence" value="ECO:0000266"/>
    <property type="project" value="RGD"/>
</dbReference>
<dbReference type="GO" id="GO:0003149">
    <property type="term" value="P:membranous septum morphogenesis"/>
    <property type="evidence" value="ECO:0000266"/>
    <property type="project" value="RGD"/>
</dbReference>
<dbReference type="GO" id="GO:0016525">
    <property type="term" value="P:negative regulation of angiogenesis"/>
    <property type="evidence" value="ECO:0000266"/>
    <property type="project" value="RGD"/>
</dbReference>
<dbReference type="GO" id="GO:0043066">
    <property type="term" value="P:negative regulation of apoptotic process"/>
    <property type="evidence" value="ECO:0000314"/>
    <property type="project" value="RGD"/>
</dbReference>
<dbReference type="GO" id="GO:0061037">
    <property type="term" value="P:negative regulation of cartilage development"/>
    <property type="evidence" value="ECO:0000266"/>
    <property type="project" value="RGD"/>
</dbReference>
<dbReference type="GO" id="GO:0030308">
    <property type="term" value="P:negative regulation of cell growth"/>
    <property type="evidence" value="ECO:0000250"/>
    <property type="project" value="AgBase"/>
</dbReference>
<dbReference type="GO" id="GO:0008285">
    <property type="term" value="P:negative regulation of cell population proliferation"/>
    <property type="evidence" value="ECO:0000315"/>
    <property type="project" value="RGD"/>
</dbReference>
<dbReference type="GO" id="GO:0050680">
    <property type="term" value="P:negative regulation of epithelial cell proliferation"/>
    <property type="evidence" value="ECO:0000250"/>
    <property type="project" value="AgBase"/>
</dbReference>
<dbReference type="GO" id="GO:1905006">
    <property type="term" value="P:negative regulation of epithelial to mesenchymal transition involved in endocardial cushion formation"/>
    <property type="evidence" value="ECO:0000266"/>
    <property type="project" value="RGD"/>
</dbReference>
<dbReference type="GO" id="GO:0010629">
    <property type="term" value="P:negative regulation of gene expression"/>
    <property type="evidence" value="ECO:0000266"/>
    <property type="project" value="RGD"/>
</dbReference>
<dbReference type="GO" id="GO:0010936">
    <property type="term" value="P:negative regulation of macrophage cytokine production"/>
    <property type="evidence" value="ECO:0000250"/>
    <property type="project" value="AgBase"/>
</dbReference>
<dbReference type="GO" id="GO:0046580">
    <property type="term" value="P:negative regulation of Ras protein signal transduction"/>
    <property type="evidence" value="ECO:0000266"/>
    <property type="project" value="RGD"/>
</dbReference>
<dbReference type="GO" id="GO:0051280">
    <property type="term" value="P:negative regulation of release of sequestered calcium ion into cytosol"/>
    <property type="evidence" value="ECO:0000314"/>
    <property type="project" value="RGD"/>
</dbReference>
<dbReference type="GO" id="GO:0003407">
    <property type="term" value="P:neural retina development"/>
    <property type="evidence" value="ECO:0000266"/>
    <property type="project" value="RGD"/>
</dbReference>
<dbReference type="GO" id="GO:0001843">
    <property type="term" value="P:neural tube closure"/>
    <property type="evidence" value="ECO:0000266"/>
    <property type="project" value="RGD"/>
</dbReference>
<dbReference type="GO" id="GO:0048666">
    <property type="term" value="P:neuron development"/>
    <property type="evidence" value="ECO:0000250"/>
    <property type="project" value="UniProtKB"/>
</dbReference>
<dbReference type="GO" id="GO:0048663">
    <property type="term" value="P:neuron fate commitment"/>
    <property type="evidence" value="ECO:0000266"/>
    <property type="project" value="RGD"/>
</dbReference>
<dbReference type="GO" id="GO:0030593">
    <property type="term" value="P:neutrophil chemotaxis"/>
    <property type="evidence" value="ECO:0000250"/>
    <property type="project" value="UniProtKB"/>
</dbReference>
<dbReference type="GO" id="GO:0003151">
    <property type="term" value="P:outflow tract morphogenesis"/>
    <property type="evidence" value="ECO:0000266"/>
    <property type="project" value="RGD"/>
</dbReference>
<dbReference type="GO" id="GO:0003148">
    <property type="term" value="P:outflow tract septum morphogenesis"/>
    <property type="evidence" value="ECO:0000266"/>
    <property type="project" value="RGD"/>
</dbReference>
<dbReference type="GO" id="GO:0031016">
    <property type="term" value="P:pancreas development"/>
    <property type="evidence" value="ECO:0000270"/>
    <property type="project" value="RGD"/>
</dbReference>
<dbReference type="GO" id="GO:1904238">
    <property type="term" value="P:pericyte cell differentiation"/>
    <property type="evidence" value="ECO:0000266"/>
    <property type="project" value="RGD"/>
</dbReference>
<dbReference type="GO" id="GO:0061626">
    <property type="term" value="P:pharyngeal arch artery morphogenesis"/>
    <property type="evidence" value="ECO:0000266"/>
    <property type="project" value="RGD"/>
</dbReference>
<dbReference type="GO" id="GO:0070237">
    <property type="term" value="P:positive regulation of activation-induced cell death of T cells"/>
    <property type="evidence" value="ECO:0000266"/>
    <property type="project" value="RGD"/>
</dbReference>
<dbReference type="GO" id="GO:0043065">
    <property type="term" value="P:positive regulation of apoptotic process"/>
    <property type="evidence" value="ECO:0000315"/>
    <property type="project" value="RGD"/>
</dbReference>
<dbReference type="GO" id="GO:0062043">
    <property type="term" value="P:positive regulation of cardiac epithelial to mesenchymal transition"/>
    <property type="evidence" value="ECO:0000266"/>
    <property type="project" value="RGD"/>
</dbReference>
<dbReference type="GO" id="GO:0051891">
    <property type="term" value="P:positive regulation of cardioblast differentiation"/>
    <property type="evidence" value="ECO:0000250"/>
    <property type="project" value="AgBase"/>
</dbReference>
<dbReference type="GO" id="GO:0033630">
    <property type="term" value="P:positive regulation of cell adhesion mediated by integrin"/>
    <property type="evidence" value="ECO:0000250"/>
    <property type="project" value="AgBase"/>
</dbReference>
<dbReference type="GO" id="GO:0045787">
    <property type="term" value="P:positive regulation of cell cycle"/>
    <property type="evidence" value="ECO:0000250"/>
    <property type="project" value="UniProtKB"/>
</dbReference>
<dbReference type="GO" id="GO:0051781">
    <property type="term" value="P:positive regulation of cell division"/>
    <property type="evidence" value="ECO:0007669"/>
    <property type="project" value="UniProtKB-KW"/>
</dbReference>
<dbReference type="GO" id="GO:0030307">
    <property type="term" value="P:positive regulation of cell growth"/>
    <property type="evidence" value="ECO:0000250"/>
    <property type="project" value="UniProtKB"/>
</dbReference>
<dbReference type="GO" id="GO:0030335">
    <property type="term" value="P:positive regulation of cell migration"/>
    <property type="evidence" value="ECO:0000314"/>
    <property type="project" value="RGD"/>
</dbReference>
<dbReference type="GO" id="GO:0008284">
    <property type="term" value="P:positive regulation of cell population proliferation"/>
    <property type="evidence" value="ECO:0000314"/>
    <property type="project" value="RGD"/>
</dbReference>
<dbReference type="GO" id="GO:0010634">
    <property type="term" value="P:positive regulation of epithelial cell migration"/>
    <property type="evidence" value="ECO:0000250"/>
    <property type="project" value="AgBase"/>
</dbReference>
<dbReference type="GO" id="GO:0010718">
    <property type="term" value="P:positive regulation of epithelial to mesenchymal transition"/>
    <property type="evidence" value="ECO:0000250"/>
    <property type="project" value="AgBase"/>
</dbReference>
<dbReference type="GO" id="GO:1905007">
    <property type="term" value="P:positive regulation of epithelial to mesenchymal transition involved in endocardial cushion formation"/>
    <property type="evidence" value="ECO:0000266"/>
    <property type="project" value="RGD"/>
</dbReference>
<dbReference type="GO" id="GO:0090091">
    <property type="term" value="P:positive regulation of extracellular matrix disassembly"/>
    <property type="evidence" value="ECO:0000266"/>
    <property type="project" value="RGD"/>
</dbReference>
<dbReference type="GO" id="GO:2001241">
    <property type="term" value="P:positive regulation of extrinsic apoptotic signaling pathway in absence of ligand"/>
    <property type="evidence" value="ECO:0000266"/>
    <property type="project" value="RGD"/>
</dbReference>
<dbReference type="GO" id="GO:0010628">
    <property type="term" value="P:positive regulation of gene expression"/>
    <property type="evidence" value="ECO:0000266"/>
    <property type="project" value="RGD"/>
</dbReference>
<dbReference type="GO" id="GO:0045823">
    <property type="term" value="P:positive regulation of heart contraction"/>
    <property type="evidence" value="ECO:0000250"/>
    <property type="project" value="AgBase"/>
</dbReference>
<dbReference type="GO" id="GO:0050778">
    <property type="term" value="P:positive regulation of immune response"/>
    <property type="evidence" value="ECO:0000250"/>
    <property type="project" value="UniProtKB"/>
</dbReference>
<dbReference type="GO" id="GO:0045726">
    <property type="term" value="P:positive regulation of integrin biosynthetic process"/>
    <property type="evidence" value="ECO:0000250"/>
    <property type="project" value="AgBase"/>
</dbReference>
<dbReference type="GO" id="GO:1902895">
    <property type="term" value="P:positive regulation of miRNA transcription"/>
    <property type="evidence" value="ECO:0000266"/>
    <property type="project" value="RGD"/>
</dbReference>
<dbReference type="GO" id="GO:0043525">
    <property type="term" value="P:positive regulation of neuron apoptotic process"/>
    <property type="evidence" value="ECO:0000250"/>
    <property type="project" value="AgBase"/>
</dbReference>
<dbReference type="GO" id="GO:0045747">
    <property type="term" value="P:positive regulation of Notch signaling pathway"/>
    <property type="evidence" value="ECO:0000266"/>
    <property type="project" value="RGD"/>
</dbReference>
<dbReference type="GO" id="GO:0051897">
    <property type="term" value="P:positive regulation of phosphatidylinositol 3-kinase/protein kinase B signal transduction"/>
    <property type="evidence" value="ECO:0000250"/>
    <property type="project" value="AgBase"/>
</dbReference>
<dbReference type="GO" id="GO:1900182">
    <property type="term" value="P:positive regulation of protein localization to nucleus"/>
    <property type="evidence" value="ECO:0000266"/>
    <property type="project" value="RGD"/>
</dbReference>
<dbReference type="GO" id="GO:0050714">
    <property type="term" value="P:positive regulation of protein secretion"/>
    <property type="evidence" value="ECO:0000250"/>
    <property type="project" value="AgBase"/>
</dbReference>
<dbReference type="GO" id="GO:0060391">
    <property type="term" value="P:positive regulation of SMAD protein signal transduction"/>
    <property type="evidence" value="ECO:0000250"/>
    <property type="project" value="AgBase"/>
</dbReference>
<dbReference type="GO" id="GO:0032874">
    <property type="term" value="P:positive regulation of stress-activated MAPK cascade"/>
    <property type="evidence" value="ECO:0000250"/>
    <property type="project" value="AgBase"/>
</dbReference>
<dbReference type="GO" id="GO:0051795">
    <property type="term" value="P:positive regulation of timing of catagen"/>
    <property type="evidence" value="ECO:0000250"/>
    <property type="project" value="AgBase"/>
</dbReference>
<dbReference type="GO" id="GO:0003184">
    <property type="term" value="P:pulmonary valve morphogenesis"/>
    <property type="evidence" value="ECO:0000266"/>
    <property type="project" value="RGD"/>
</dbReference>
<dbReference type="GO" id="GO:0032956">
    <property type="term" value="P:regulation of actin cytoskeleton organization"/>
    <property type="evidence" value="ECO:0000266"/>
    <property type="project" value="RGD"/>
</dbReference>
<dbReference type="GO" id="GO:0042981">
    <property type="term" value="P:regulation of apoptotic process"/>
    <property type="evidence" value="ECO:0000266"/>
    <property type="project" value="RGD"/>
</dbReference>
<dbReference type="GO" id="GO:1902256">
    <property type="term" value="P:regulation of apoptotic process involved in outflow tract morphogenesis"/>
    <property type="evidence" value="ECO:0000266"/>
    <property type="project" value="RGD"/>
</dbReference>
<dbReference type="GO" id="GO:0001558">
    <property type="term" value="P:regulation of cell growth"/>
    <property type="evidence" value="ECO:0000304"/>
    <property type="project" value="RGD"/>
</dbReference>
<dbReference type="GO" id="GO:0042127">
    <property type="term" value="P:regulation of cell population proliferation"/>
    <property type="evidence" value="ECO:0000250"/>
    <property type="project" value="AgBase"/>
</dbReference>
<dbReference type="GO" id="GO:1903053">
    <property type="term" value="P:regulation of extracellular matrix organization"/>
    <property type="evidence" value="ECO:0000266"/>
    <property type="project" value="RGD"/>
</dbReference>
<dbReference type="GO" id="GO:0051794">
    <property type="term" value="P:regulation of timing of catagen"/>
    <property type="evidence" value="ECO:0000250"/>
    <property type="project" value="UniProtKB"/>
</dbReference>
<dbReference type="GO" id="GO:0032909">
    <property type="term" value="P:regulation of transforming growth factor beta2 production"/>
    <property type="evidence" value="ECO:0000250"/>
    <property type="project" value="AgBase"/>
</dbReference>
<dbReference type="GO" id="GO:0034097">
    <property type="term" value="P:response to cytokine"/>
    <property type="evidence" value="ECO:0000270"/>
    <property type="project" value="RGD"/>
</dbReference>
<dbReference type="GO" id="GO:0032355">
    <property type="term" value="P:response to estradiol"/>
    <property type="evidence" value="ECO:0000270"/>
    <property type="project" value="RGD"/>
</dbReference>
<dbReference type="GO" id="GO:0043627">
    <property type="term" value="P:response to estrogen"/>
    <property type="evidence" value="ECO:0000314"/>
    <property type="project" value="RGD"/>
</dbReference>
<dbReference type="GO" id="GO:0001666">
    <property type="term" value="P:response to hypoxia"/>
    <property type="evidence" value="ECO:0000250"/>
    <property type="project" value="UniProtKB"/>
</dbReference>
<dbReference type="GO" id="GO:0034616">
    <property type="term" value="P:response to laminar fluid shear stress"/>
    <property type="evidence" value="ECO:0000270"/>
    <property type="project" value="RGD"/>
</dbReference>
<dbReference type="GO" id="GO:0032570">
    <property type="term" value="P:response to progesterone"/>
    <property type="evidence" value="ECO:0000250"/>
    <property type="project" value="AgBase"/>
</dbReference>
<dbReference type="GO" id="GO:0032526">
    <property type="term" value="P:response to retinoic acid"/>
    <property type="evidence" value="ECO:0000270"/>
    <property type="project" value="RGD"/>
</dbReference>
<dbReference type="GO" id="GO:0033280">
    <property type="term" value="P:response to vitamin D"/>
    <property type="evidence" value="ECO:0000270"/>
    <property type="project" value="RGD"/>
</dbReference>
<dbReference type="GO" id="GO:0009611">
    <property type="term" value="P:response to wounding"/>
    <property type="evidence" value="ECO:0000250"/>
    <property type="project" value="AgBase"/>
</dbReference>
<dbReference type="GO" id="GO:0009410">
    <property type="term" value="P:response to xenobiotic stimulus"/>
    <property type="evidence" value="ECO:0000270"/>
    <property type="project" value="RGD"/>
</dbReference>
<dbReference type="GO" id="GO:0007435">
    <property type="term" value="P:salivary gland morphogenesis"/>
    <property type="evidence" value="ECO:0000250"/>
    <property type="project" value="AgBase"/>
</dbReference>
<dbReference type="GO" id="GO:0062009">
    <property type="term" value="P:secondary palate development"/>
    <property type="evidence" value="ECO:0000266"/>
    <property type="project" value="RGD"/>
</dbReference>
<dbReference type="GO" id="GO:0007165">
    <property type="term" value="P:signal transduction"/>
    <property type="evidence" value="ECO:0000250"/>
    <property type="project" value="AgBase"/>
</dbReference>
<dbReference type="GO" id="GO:0023052">
    <property type="term" value="P:signaling"/>
    <property type="evidence" value="ECO:0000250"/>
    <property type="project" value="AgBase"/>
</dbReference>
<dbReference type="GO" id="GO:0007519">
    <property type="term" value="P:skeletal muscle tissue development"/>
    <property type="evidence" value="ECO:0000270"/>
    <property type="project" value="RGD"/>
</dbReference>
<dbReference type="GO" id="GO:0001501">
    <property type="term" value="P:skeletal system development"/>
    <property type="evidence" value="ECO:0000266"/>
    <property type="project" value="RGD"/>
</dbReference>
<dbReference type="GO" id="GO:0048103">
    <property type="term" value="P:somatic stem cell division"/>
    <property type="evidence" value="ECO:0000250"/>
    <property type="project" value="UniProtKB"/>
</dbReference>
<dbReference type="GO" id="GO:1903701">
    <property type="term" value="P:substantia propria of cornea development"/>
    <property type="evidence" value="ECO:0000266"/>
    <property type="project" value="RGD"/>
</dbReference>
<dbReference type="GO" id="GO:0030878">
    <property type="term" value="P:thyroid gland development"/>
    <property type="evidence" value="ECO:0000270"/>
    <property type="project" value="RGD"/>
</dbReference>
<dbReference type="GO" id="GO:0007179">
    <property type="term" value="P:transforming growth factor beta receptor signaling pathway"/>
    <property type="evidence" value="ECO:0000250"/>
    <property type="project" value="AgBase"/>
</dbReference>
<dbReference type="GO" id="GO:0060065">
    <property type="term" value="P:uterus development"/>
    <property type="evidence" value="ECO:0000266"/>
    <property type="project" value="RGD"/>
</dbReference>
<dbReference type="GO" id="GO:0060412">
    <property type="term" value="P:ventricular septum morphogenesis"/>
    <property type="evidence" value="ECO:0000266"/>
    <property type="project" value="RGD"/>
</dbReference>
<dbReference type="GO" id="GO:0003222">
    <property type="term" value="P:ventricular trabecula myocardium morphogenesis"/>
    <property type="evidence" value="ECO:0000266"/>
    <property type="project" value="RGD"/>
</dbReference>
<dbReference type="GO" id="GO:0042060">
    <property type="term" value="P:wound healing"/>
    <property type="evidence" value="ECO:0000250"/>
    <property type="project" value="UniProtKB"/>
</dbReference>
<dbReference type="CDD" id="cd19385">
    <property type="entry name" value="TGF_beta_TGFB2"/>
    <property type="match status" value="1"/>
</dbReference>
<dbReference type="FunFam" id="2.10.90.10:FF:000004">
    <property type="entry name" value="Transforming growth factor beta"/>
    <property type="match status" value="1"/>
</dbReference>
<dbReference type="FunFam" id="2.60.120.970:FF:000002">
    <property type="entry name" value="Transforming growth factor beta"/>
    <property type="match status" value="1"/>
</dbReference>
<dbReference type="Gene3D" id="2.60.120.970">
    <property type="match status" value="1"/>
</dbReference>
<dbReference type="Gene3D" id="2.10.90.10">
    <property type="entry name" value="Cystine-knot cytokines"/>
    <property type="match status" value="1"/>
</dbReference>
<dbReference type="InterPro" id="IPR029034">
    <property type="entry name" value="Cystine-knot_cytokine"/>
</dbReference>
<dbReference type="InterPro" id="IPR001839">
    <property type="entry name" value="TGF-b_C"/>
</dbReference>
<dbReference type="InterPro" id="IPR001111">
    <property type="entry name" value="TGF-b_propeptide"/>
</dbReference>
<dbReference type="InterPro" id="IPR016319">
    <property type="entry name" value="TGF-beta"/>
</dbReference>
<dbReference type="InterPro" id="IPR015615">
    <property type="entry name" value="TGF-beta-rel"/>
</dbReference>
<dbReference type="InterPro" id="IPR003940">
    <property type="entry name" value="TGFb2"/>
</dbReference>
<dbReference type="InterPro" id="IPR017948">
    <property type="entry name" value="TGFb_CS"/>
</dbReference>
<dbReference type="PANTHER" id="PTHR11848">
    <property type="entry name" value="TGF-BETA FAMILY"/>
    <property type="match status" value="1"/>
</dbReference>
<dbReference type="PANTHER" id="PTHR11848:SF141">
    <property type="entry name" value="TRANSFORMING GROWTH FACTOR BETA-2 PROPROTEIN"/>
    <property type="match status" value="1"/>
</dbReference>
<dbReference type="Pfam" id="PF00019">
    <property type="entry name" value="TGF_beta"/>
    <property type="match status" value="1"/>
</dbReference>
<dbReference type="Pfam" id="PF00688">
    <property type="entry name" value="TGFb_propeptide"/>
    <property type="match status" value="1"/>
</dbReference>
<dbReference type="PIRSF" id="PIRSF001787">
    <property type="entry name" value="TGF-beta"/>
    <property type="match status" value="1"/>
</dbReference>
<dbReference type="PRINTS" id="PR01423">
    <property type="entry name" value="TGFBETA"/>
</dbReference>
<dbReference type="PRINTS" id="PR01425">
    <property type="entry name" value="TGFBETA2"/>
</dbReference>
<dbReference type="SMART" id="SM00204">
    <property type="entry name" value="TGFB"/>
    <property type="match status" value="1"/>
</dbReference>
<dbReference type="SUPFAM" id="SSF57501">
    <property type="entry name" value="Cystine-knot cytokines"/>
    <property type="match status" value="1"/>
</dbReference>
<dbReference type="PROSITE" id="PS00250">
    <property type="entry name" value="TGF_BETA_1"/>
    <property type="match status" value="1"/>
</dbReference>
<dbReference type="PROSITE" id="PS51362">
    <property type="entry name" value="TGF_BETA_2"/>
    <property type="match status" value="1"/>
</dbReference>
<evidence type="ECO:0000250" key="1">
    <source>
        <dbReference type="UniProtKB" id="P01137"/>
    </source>
</evidence>
<evidence type="ECO:0000250" key="2">
    <source>
        <dbReference type="UniProtKB" id="P04202"/>
    </source>
</evidence>
<evidence type="ECO:0000250" key="3">
    <source>
        <dbReference type="UniProtKB" id="P27090"/>
    </source>
</evidence>
<evidence type="ECO:0000250" key="4">
    <source>
        <dbReference type="UniProtKB" id="P61812"/>
    </source>
</evidence>
<evidence type="ECO:0000255" key="5"/>
<evidence type="ECO:0000269" key="6">
    <source>
    </source>
</evidence>
<evidence type="ECO:0000269" key="7">
    <source>
    </source>
</evidence>
<evidence type="ECO:0000303" key="8">
    <source>
    </source>
</evidence>
<evidence type="ECO:0000303" key="9">
    <source>
    </source>
</evidence>
<evidence type="ECO:0000303" key="10">
    <source ref="3"/>
</evidence>
<evidence type="ECO:0000305" key="11"/>
<keyword id="KW-0025">Alternative splicing</keyword>
<keyword id="KW-0165">Cleavage on pair of basic residues</keyword>
<keyword id="KW-1015">Disulfide bond</keyword>
<keyword id="KW-0272">Extracellular matrix</keyword>
<keyword id="KW-0325">Glycoprotein</keyword>
<keyword id="KW-0339">Growth factor</keyword>
<keyword id="KW-0497">Mitogen</keyword>
<keyword id="KW-1185">Reference proteome</keyword>
<keyword id="KW-0964">Secreted</keyword>
<keyword id="KW-0732">Signal</keyword>
<protein>
    <recommendedName>
        <fullName>Transforming growth factor beta-2 proprotein</fullName>
    </recommendedName>
    <component>
        <recommendedName>
            <fullName>Latency-associated peptide</fullName>
            <shortName>LAP</shortName>
        </recommendedName>
    </component>
    <component>
        <recommendedName>
            <fullName>Transforming growth factor beta-2</fullName>
            <shortName>TGF-beta-2</shortName>
        </recommendedName>
    </component>
</protein>
<reference key="1">
    <citation type="journal article" date="2000" name="Biochim. Biophys. Acta">
        <title>The expression and structure of TGF-beta2 transcripts in rat muscles.</title>
        <authorList>
            <person name="Koishi K."/>
            <person name="Dalzell K.G."/>
            <person name="McLennan I.S."/>
        </authorList>
    </citation>
    <scope>NUCLEOTIDE SEQUENCE [MRNA] (ISOFORMS TGF-BETA2A AND TGF-BETA2B)</scope>
    <scope>TISSUE SPECIFICITY</scope>
    <scope>DEVELOPMENTAL STAGE</scope>
    <scope>INDUCTION</scope>
    <source>
        <strain>Wistar</strain>
        <tissue>Muscle</tissue>
    </source>
</reference>
<reference key="2">
    <citation type="journal article" date="2000" name="Endocrinology">
        <title>Transforming growth factor-beta2 mediates mesenchymal-epithelial interactions of testicular somatic cells.</title>
        <authorList>
            <person name="Konrad L."/>
            <person name="Albrecht M."/>
            <person name="Renneberg H."/>
            <person name="Aumuller G."/>
        </authorList>
    </citation>
    <scope>NUCLEOTIDE SEQUENCE [MRNA] (ISOFORM TGF-BETA2A)</scope>
    <source>
        <strain>Wistar</strain>
    </source>
</reference>
<reference key="3">
    <citation type="submission" date="1999-03" db="EMBL/GenBank/DDBJ databases">
        <title>Rat transforming growth factor-beta2, complete coding sequence.</title>
        <authorList>
            <person name="Plisov S.Y."/>
            <person name="Ivanov S.V."/>
            <person name="Plisova T.M."/>
            <person name="Lerman M."/>
            <person name="Perantoni A.O."/>
        </authorList>
    </citation>
    <scope>NUCLEOTIDE SEQUENCE [MRNA] (ISOFORM TGF-BETA2A)</scope>
</reference>
<reference key="4">
    <citation type="journal article" date="1993" name="J. Cell Biol.">
        <title>A role for TGF-beta in oligodendrocyte differentiation.</title>
        <authorList>
            <person name="McKinnon R.D."/>
            <person name="Piras G."/>
            <person name="Ida J."/>
            <person name="Dubois-Dalq M."/>
        </authorList>
    </citation>
    <scope>NUCLEOTIDE SEQUENCE [MRNA] OF 278-348</scope>
</reference>
<reference key="5">
    <citation type="journal article" date="1993" name="J. Clin. Invest.">
        <title>Cell-cell signaling between adult rat ventricular myocytes and cardiac microvascular endothelial cells in heterotypic primary culture.</title>
        <authorList>
            <person name="Nishida M."/>
            <person name="Springhorn J.P."/>
            <person name="Kelly R.A."/>
            <person name="Smith T.W."/>
        </authorList>
    </citation>
    <scope>NUCLEOTIDE SEQUENCE [MRNA] OF 366-441</scope>
    <source>
        <strain>Sprague-Dawley</strain>
        <tissue>Heart</tissue>
    </source>
</reference>
<reference key="6">
    <citation type="journal article" date="2016" name="J. Cell Biol.">
        <title>Plakophilin-2 loss promotes TGF-beta1/p38 MAPK-dependent fibrotic gene expression in cardiomyocytes.</title>
        <authorList>
            <person name="Dubash A.D."/>
            <person name="Kam C.Y."/>
            <person name="Aguado B.A."/>
            <person name="Patel D.M."/>
            <person name="Delmar M."/>
            <person name="Shea L.D."/>
            <person name="Green K.J."/>
        </authorList>
    </citation>
    <scope>TISSUE SPECIFICITY</scope>
</reference>
<accession>Q07257</accession>
<accession>Q63574</accession>
<accession>Q9QW26</accession>
<accession>Q9R281</accession>
<accession>Q9R298</accession>
<accession>Q9R2B8</accession>
<accession>Q9WUQ8</accession>
<name>TGFB2_RAT</name>
<sequence length="442" mass="50534">MHYCVLRTFLLLHLVPVALSLSTCSTLDMDQFMRKRIEAIRGQILSKLKLTSPPEDYPEPDEVPPEVISIYNSTRDLLQEKASRRAAACERERSDEEYYAKEVYKIDMPSHFPSETVCPVVTTSSGSVGSFCSIQSQVLCGYLDAIPPTFYRPYFRIVRFDVSTMEKNASNLVKAEFRVFRLQNPKARVAEQRIELYQILKSKDLTSPTQRYIDSKVVKTRAEGEWLSFDVTDAVHEWLHHKDRNLGFKISLHCPCCTFIPSNNYIIPNKSQELEARFAGIDGTSTYASGDQKTIKSTRKKSSGKTPHLLLMLLPSYRLESQQSSRRRKRALDAAYCFRNVQDNCCLRPLYIDFKRDLGWKWIHEPKGYNANFCAGACPYLWSSDTQHTKVLSLYNTINPEASASPCCVSQDLEPLTILYYIGNTPKIEQLSNMIVKSCKCS</sequence>
<proteinExistence type="evidence at transcript level"/>
<comment type="function">
    <molecule>Transforming growth factor beta-2 proprotein</molecule>
    <text evidence="1 2">Precursor of the Latency-associated peptide (LAP) and Transforming growth factor beta-2 (TGF-beta-2) chains, which constitute the regulatory and active subunit of TGF-beta-2, respectively.</text>
</comment>
<comment type="function">
    <molecule>Latency-associated peptide</molecule>
    <text evidence="1 2">Required to maintain the Transforming growth factor beta-2 (TGF-beta-2) chain in a latent state during storage in extracellular matrix. Associates non-covalently with TGF-beta-2 and regulates its activation via interaction with 'milieu molecules', such as LTBP1 and LRRC32/GARP, that control activation of TGF-beta-2.</text>
</comment>
<comment type="function">
    <molecule>Transforming growth factor beta-2</molecule>
    <text evidence="1 2 4">Multifunctional protein that regulates various processes such as angiogenesis and heart development (By similarity). Activation into mature form follows different steps: following cleavage of the proprotein in the Golgi apparatus, Latency-associated peptide (LAP) and Transforming growth factor beta-2 (TGF-beta-2) chains remain non-covalently linked rendering TGF-beta-2 inactive during storage in extracellular matrix (By similarity). At the same time, LAP chain interacts with 'milieu molecules', such as LTBP1 and LRRC32/GARP, that control activation of TGF-beta-2 and maintain it in a latent state during storage in extracellular milieus (By similarity). Once activated following release of LAP, TGF-beta-2 acts by binding to TGF-beta receptors (TGFBR1 and TGFBR2), which transduce signal (By similarity).</text>
</comment>
<comment type="subunit">
    <text evidence="1 3 4">Interacts with the serine proteases, HTRA1 and HTRA3 (By similarity). Interacts with ASPN (By similarity). Interacts with MFAP5 (By similarity).</text>
</comment>
<comment type="subunit">
    <molecule>Latency-associated peptide</molecule>
    <text evidence="1 3 4">Interacts with Transforming growth factor beta-2 (TGF-beta-2) chain; interaction is non-covalent and maintains (TGF-beta-2) in a latent state (By similarity). Interacts with LRRC32/GARP; leading to regulate activation of TGF-beta-2 (By similarity). Interacts with NREP; the interaction results in a decrease in TGFB2 autoinduction (By similarity).</text>
</comment>
<comment type="subunit">
    <molecule>Transforming growth factor beta-2</molecule>
    <text evidence="1 3 4">Transforming growth factor beta-2: Homodimer; disulfide-linked (By similarity). Transforming growth factor beta-2: Interacts with TGF-beta receptors (TGFBR1 and TGFBR2), leading to signal transduction (By similarity).</text>
</comment>
<comment type="subcellular location">
    <molecule>Latency-associated peptide</molecule>
    <subcellularLocation>
        <location evidence="1">Secreted</location>
        <location evidence="1">Extracellular space</location>
        <location evidence="1">Extracellular matrix</location>
    </subcellularLocation>
</comment>
<comment type="subcellular location">
    <molecule>Transforming growth factor beta-2</molecule>
    <subcellularLocation>
        <location evidence="1">Secreted</location>
    </subcellularLocation>
</comment>
<comment type="alternative products">
    <event type="alternative splicing"/>
    <isoform>
        <id>Q07257-1</id>
        <name>TGF-beta2B</name>
        <sequence type="displayed"/>
    </isoform>
    <isoform>
        <id>Q07257-2</id>
        <name>TGF-beta2A</name>
        <sequence type="described" ref="VSP_006418 VSP_006419"/>
    </isoform>
</comment>
<comment type="tissue specificity">
    <text evidence="7">Expressed in cardiomyocytes.</text>
</comment>
<comment type="tissue specificity">
    <molecule>Isoform TGF-beta2B</molecule>
    <text evidence="6">Expressed in the aorta, primary bronchus, uterus, heart, skeletal muscle, sciatic nerve and spinal cord but not in the intestine.</text>
</comment>
<comment type="developmental stage">
    <text evidence="6">High expression at 14 dpc. Sharp decline in expression between 16 dpc and 18 dpc. Absent in adulthood.</text>
</comment>
<comment type="induction">
    <text evidence="6">Both isoforms down-regulated during muscle development. Up-regulated after denervation.</text>
</comment>
<comment type="PTM">
    <molecule>Transforming growth factor beta-2</molecule>
    <text evidence="1">The precursor proprotein is cleaved in the Golgi apparatus to form Transforming growth factor beta-2 (TGF-beta-2) and Latency-associated peptide (LAP) chains, which remain non-covalently linked, rendering TGF-beta-2 inactive.</text>
</comment>
<comment type="similarity">
    <text evidence="11">Belongs to the TGF-beta family.</text>
</comment>
<feature type="signal peptide" evidence="5">
    <location>
        <begin position="1"/>
        <end position="20"/>
    </location>
</feature>
<feature type="chain" id="PRO_0000456184" description="Transforming growth factor beta-2 proprotein">
    <location>
        <begin position="21"/>
        <end position="442"/>
    </location>
</feature>
<feature type="chain" id="PRO_0000033790" description="Latency-associated peptide" evidence="4">
    <location>
        <begin position="21"/>
        <end position="330"/>
    </location>
</feature>
<feature type="chain" id="PRO_0000033791" description="Transforming growth factor beta-2" evidence="4">
    <location>
        <begin position="331"/>
        <end position="442"/>
    </location>
</feature>
<feature type="glycosylation site" description="N-linked (GlcNAc...) asparagine" evidence="5">
    <location>
        <position position="72"/>
    </location>
</feature>
<feature type="glycosylation site" description="N-linked (GlcNAc...) asparagine" evidence="5">
    <location>
        <position position="168"/>
    </location>
</feature>
<feature type="glycosylation site" description="N-linked (GlcNAc...) asparagine" evidence="5">
    <location>
        <position position="269"/>
    </location>
</feature>
<feature type="disulfide bond" evidence="4">
    <location>
        <begin position="337"/>
        <end position="346"/>
    </location>
</feature>
<feature type="disulfide bond" evidence="4">
    <location>
        <begin position="345"/>
        <end position="408"/>
    </location>
</feature>
<feature type="disulfide bond" evidence="4">
    <location>
        <begin position="374"/>
        <end position="439"/>
    </location>
</feature>
<feature type="disulfide bond" evidence="4">
    <location>
        <begin position="378"/>
        <end position="441"/>
    </location>
</feature>
<feature type="disulfide bond" description="Interchain" evidence="4">
    <location>
        <position position="407"/>
    </location>
</feature>
<feature type="splice variant" id="VSP_006418" description="In isoform TGF-beta2A." evidence="8 9 10">
    <location>
        <begin position="116"/>
        <end position="143"/>
    </location>
</feature>
<feature type="splice variant" id="VSP_006419" description="In isoform TGF-beta2A." evidence="8 9 10">
    <original>D</original>
    <variation>N</variation>
    <location>
        <position position="144"/>
    </location>
</feature>
<feature type="sequence conflict" description="In Ref. 2; CAB42003." evidence="11" ref="2">
    <original>Y</original>
    <variation>C</variation>
    <location>
        <position position="99"/>
    </location>
</feature>
<feature type="sequence conflict" description="In Ref. 3; AAD24484." evidence="11" ref="3">
    <original>L</original>
    <variation>P</variation>
    <location>
        <position position="310"/>
    </location>
</feature>
<feature type="sequence conflict" description="In Ref. 2; CAB42003 and 4; CAA50723." evidence="11" ref="2 4">
    <original>D</original>
    <variation>H</variation>
    <location>
        <position position="343"/>
    </location>
</feature>
<gene>
    <name type="primary">Tgfb2</name>
</gene>
<organism>
    <name type="scientific">Rattus norvegicus</name>
    <name type="common">Rat</name>
    <dbReference type="NCBI Taxonomy" id="10116"/>
    <lineage>
        <taxon>Eukaryota</taxon>
        <taxon>Metazoa</taxon>
        <taxon>Chordata</taxon>
        <taxon>Craniata</taxon>
        <taxon>Vertebrata</taxon>
        <taxon>Euteleostomi</taxon>
        <taxon>Mammalia</taxon>
        <taxon>Eutheria</taxon>
        <taxon>Euarchontoglires</taxon>
        <taxon>Glires</taxon>
        <taxon>Rodentia</taxon>
        <taxon>Myomorpha</taxon>
        <taxon>Muroidea</taxon>
        <taxon>Muridae</taxon>
        <taxon>Murinae</taxon>
        <taxon>Rattus</taxon>
    </lineage>
</organism>